<proteinExistence type="inferred from homology"/>
<gene>
    <name evidence="1" type="primary">ispF</name>
    <name type="ordered locus">Psyr_1369</name>
</gene>
<accession>Q4ZWQ2</accession>
<reference key="1">
    <citation type="journal article" date="2005" name="Proc. Natl. Acad. Sci. U.S.A.">
        <title>Comparison of the complete genome sequences of Pseudomonas syringae pv. syringae B728a and pv. tomato DC3000.</title>
        <authorList>
            <person name="Feil H."/>
            <person name="Feil W.S."/>
            <person name="Chain P."/>
            <person name="Larimer F."/>
            <person name="Dibartolo G."/>
            <person name="Copeland A."/>
            <person name="Lykidis A."/>
            <person name="Trong S."/>
            <person name="Nolan M."/>
            <person name="Goltsman E."/>
            <person name="Thiel J."/>
            <person name="Malfatti S."/>
            <person name="Loper J.E."/>
            <person name="Lapidus A."/>
            <person name="Detter J.C."/>
            <person name="Land M."/>
            <person name="Richardson P.M."/>
            <person name="Kyrpides N.C."/>
            <person name="Ivanova N."/>
            <person name="Lindow S.E."/>
        </authorList>
    </citation>
    <scope>NUCLEOTIDE SEQUENCE [LARGE SCALE GENOMIC DNA]</scope>
    <source>
        <strain>B728a</strain>
    </source>
</reference>
<evidence type="ECO:0000255" key="1">
    <source>
        <dbReference type="HAMAP-Rule" id="MF_00107"/>
    </source>
</evidence>
<organism>
    <name type="scientific">Pseudomonas syringae pv. syringae (strain B728a)</name>
    <dbReference type="NCBI Taxonomy" id="205918"/>
    <lineage>
        <taxon>Bacteria</taxon>
        <taxon>Pseudomonadati</taxon>
        <taxon>Pseudomonadota</taxon>
        <taxon>Gammaproteobacteria</taxon>
        <taxon>Pseudomonadales</taxon>
        <taxon>Pseudomonadaceae</taxon>
        <taxon>Pseudomonas</taxon>
        <taxon>Pseudomonas syringae</taxon>
    </lineage>
</organism>
<dbReference type="EC" id="4.6.1.12" evidence="1"/>
<dbReference type="EMBL" id="CP000075">
    <property type="protein sequence ID" value="AAY36420.1"/>
    <property type="molecule type" value="Genomic_DNA"/>
</dbReference>
<dbReference type="RefSeq" id="WP_011266985.1">
    <property type="nucleotide sequence ID" value="NC_007005.1"/>
</dbReference>
<dbReference type="RefSeq" id="YP_234458.1">
    <property type="nucleotide sequence ID" value="NC_007005.1"/>
</dbReference>
<dbReference type="SMR" id="Q4ZWQ2"/>
<dbReference type="STRING" id="205918.Psyr_1369"/>
<dbReference type="KEGG" id="psb:Psyr_1369"/>
<dbReference type="PATRIC" id="fig|205918.7.peg.1402"/>
<dbReference type="eggNOG" id="COG0245">
    <property type="taxonomic scope" value="Bacteria"/>
</dbReference>
<dbReference type="HOGENOM" id="CLU_084630_2_0_6"/>
<dbReference type="OrthoDB" id="9804336at2"/>
<dbReference type="UniPathway" id="UPA00056">
    <property type="reaction ID" value="UER00095"/>
</dbReference>
<dbReference type="Proteomes" id="UP000000426">
    <property type="component" value="Chromosome"/>
</dbReference>
<dbReference type="GO" id="GO:0008685">
    <property type="term" value="F:2-C-methyl-D-erythritol 2,4-cyclodiphosphate synthase activity"/>
    <property type="evidence" value="ECO:0007669"/>
    <property type="project" value="UniProtKB-UniRule"/>
</dbReference>
<dbReference type="GO" id="GO:0046872">
    <property type="term" value="F:metal ion binding"/>
    <property type="evidence" value="ECO:0007669"/>
    <property type="project" value="UniProtKB-KW"/>
</dbReference>
<dbReference type="GO" id="GO:0019288">
    <property type="term" value="P:isopentenyl diphosphate biosynthetic process, methylerythritol 4-phosphate pathway"/>
    <property type="evidence" value="ECO:0007669"/>
    <property type="project" value="UniProtKB-UniRule"/>
</dbReference>
<dbReference type="GO" id="GO:0016114">
    <property type="term" value="P:terpenoid biosynthetic process"/>
    <property type="evidence" value="ECO:0007669"/>
    <property type="project" value="InterPro"/>
</dbReference>
<dbReference type="CDD" id="cd00554">
    <property type="entry name" value="MECDP_synthase"/>
    <property type="match status" value="1"/>
</dbReference>
<dbReference type="FunFam" id="3.30.1330.50:FF:000001">
    <property type="entry name" value="2-C-methyl-D-erythritol 2,4-cyclodiphosphate synthase"/>
    <property type="match status" value="1"/>
</dbReference>
<dbReference type="Gene3D" id="3.30.1330.50">
    <property type="entry name" value="2-C-methyl-D-erythritol 2,4-cyclodiphosphate synthase"/>
    <property type="match status" value="1"/>
</dbReference>
<dbReference type="HAMAP" id="MF_00107">
    <property type="entry name" value="IspF"/>
    <property type="match status" value="1"/>
</dbReference>
<dbReference type="InterPro" id="IPR003526">
    <property type="entry name" value="MECDP_synthase"/>
</dbReference>
<dbReference type="InterPro" id="IPR020555">
    <property type="entry name" value="MECDP_synthase_CS"/>
</dbReference>
<dbReference type="InterPro" id="IPR036571">
    <property type="entry name" value="MECDP_synthase_sf"/>
</dbReference>
<dbReference type="NCBIfam" id="TIGR00151">
    <property type="entry name" value="ispF"/>
    <property type="match status" value="1"/>
</dbReference>
<dbReference type="PANTHER" id="PTHR43181">
    <property type="entry name" value="2-C-METHYL-D-ERYTHRITOL 2,4-CYCLODIPHOSPHATE SYNTHASE, CHLOROPLASTIC"/>
    <property type="match status" value="1"/>
</dbReference>
<dbReference type="PANTHER" id="PTHR43181:SF1">
    <property type="entry name" value="2-C-METHYL-D-ERYTHRITOL 2,4-CYCLODIPHOSPHATE SYNTHASE, CHLOROPLASTIC"/>
    <property type="match status" value="1"/>
</dbReference>
<dbReference type="Pfam" id="PF02542">
    <property type="entry name" value="YgbB"/>
    <property type="match status" value="1"/>
</dbReference>
<dbReference type="SUPFAM" id="SSF69765">
    <property type="entry name" value="IpsF-like"/>
    <property type="match status" value="1"/>
</dbReference>
<dbReference type="PROSITE" id="PS01350">
    <property type="entry name" value="ISPF"/>
    <property type="match status" value="1"/>
</dbReference>
<feature type="chain" id="PRO_0000237745" description="2-C-methyl-D-erythritol 2,4-cyclodiphosphate synthase">
    <location>
        <begin position="1"/>
        <end position="157"/>
    </location>
</feature>
<feature type="binding site" evidence="1">
    <location>
        <begin position="8"/>
        <end position="10"/>
    </location>
    <ligand>
        <name>4-CDP-2-C-methyl-D-erythritol 2-phosphate</name>
        <dbReference type="ChEBI" id="CHEBI:57919"/>
    </ligand>
</feature>
<feature type="binding site" evidence="1">
    <location>
        <position position="8"/>
    </location>
    <ligand>
        <name>a divalent metal cation</name>
        <dbReference type="ChEBI" id="CHEBI:60240"/>
    </ligand>
</feature>
<feature type="binding site" evidence="1">
    <location>
        <position position="10"/>
    </location>
    <ligand>
        <name>a divalent metal cation</name>
        <dbReference type="ChEBI" id="CHEBI:60240"/>
    </ligand>
</feature>
<feature type="binding site" evidence="1">
    <location>
        <begin position="34"/>
        <end position="35"/>
    </location>
    <ligand>
        <name>4-CDP-2-C-methyl-D-erythritol 2-phosphate</name>
        <dbReference type="ChEBI" id="CHEBI:57919"/>
    </ligand>
</feature>
<feature type="binding site" evidence="1">
    <location>
        <position position="42"/>
    </location>
    <ligand>
        <name>a divalent metal cation</name>
        <dbReference type="ChEBI" id="CHEBI:60240"/>
    </ligand>
</feature>
<feature type="binding site" evidence="1">
    <location>
        <begin position="56"/>
        <end position="58"/>
    </location>
    <ligand>
        <name>4-CDP-2-C-methyl-D-erythritol 2-phosphate</name>
        <dbReference type="ChEBI" id="CHEBI:57919"/>
    </ligand>
</feature>
<feature type="binding site" evidence="1">
    <location>
        <begin position="61"/>
        <end position="65"/>
    </location>
    <ligand>
        <name>4-CDP-2-C-methyl-D-erythritol 2-phosphate</name>
        <dbReference type="ChEBI" id="CHEBI:57919"/>
    </ligand>
</feature>
<feature type="binding site" evidence="1">
    <location>
        <begin position="100"/>
        <end position="106"/>
    </location>
    <ligand>
        <name>4-CDP-2-C-methyl-D-erythritol 2-phosphate</name>
        <dbReference type="ChEBI" id="CHEBI:57919"/>
    </ligand>
</feature>
<feature type="binding site" evidence="1">
    <location>
        <begin position="132"/>
        <end position="135"/>
    </location>
    <ligand>
        <name>4-CDP-2-C-methyl-D-erythritol 2-phosphate</name>
        <dbReference type="ChEBI" id="CHEBI:57919"/>
    </ligand>
</feature>
<feature type="binding site" evidence="1">
    <location>
        <position position="139"/>
    </location>
    <ligand>
        <name>4-CDP-2-C-methyl-D-erythritol 2-phosphate</name>
        <dbReference type="ChEBI" id="CHEBI:57919"/>
    </ligand>
</feature>
<feature type="binding site" evidence="1">
    <location>
        <position position="142"/>
    </location>
    <ligand>
        <name>4-CDP-2-C-methyl-D-erythritol 2-phosphate</name>
        <dbReference type="ChEBI" id="CHEBI:57919"/>
    </ligand>
</feature>
<feature type="site" description="Transition state stabilizer" evidence="1">
    <location>
        <position position="34"/>
    </location>
</feature>
<feature type="site" description="Transition state stabilizer" evidence="1">
    <location>
        <position position="133"/>
    </location>
</feature>
<keyword id="KW-0414">Isoprene biosynthesis</keyword>
<keyword id="KW-0456">Lyase</keyword>
<keyword id="KW-0479">Metal-binding</keyword>
<comment type="function">
    <text evidence="1">Involved in the biosynthesis of isopentenyl diphosphate (IPP) and dimethylallyl diphosphate (DMAPP), two major building blocks of isoprenoid compounds. Catalyzes the conversion of 4-diphosphocytidyl-2-C-methyl-D-erythritol 2-phosphate (CDP-ME2P) to 2-C-methyl-D-erythritol 2,4-cyclodiphosphate (ME-CPP) with a corresponding release of cytidine 5-monophosphate (CMP).</text>
</comment>
<comment type="catalytic activity">
    <reaction evidence="1">
        <text>4-CDP-2-C-methyl-D-erythritol 2-phosphate = 2-C-methyl-D-erythritol 2,4-cyclic diphosphate + CMP</text>
        <dbReference type="Rhea" id="RHEA:23864"/>
        <dbReference type="ChEBI" id="CHEBI:57919"/>
        <dbReference type="ChEBI" id="CHEBI:58483"/>
        <dbReference type="ChEBI" id="CHEBI:60377"/>
        <dbReference type="EC" id="4.6.1.12"/>
    </reaction>
</comment>
<comment type="cofactor">
    <cofactor evidence="1">
        <name>a divalent metal cation</name>
        <dbReference type="ChEBI" id="CHEBI:60240"/>
    </cofactor>
    <text evidence="1">Binds 1 divalent metal cation per subunit.</text>
</comment>
<comment type="pathway">
    <text evidence="1">Isoprenoid biosynthesis; isopentenyl diphosphate biosynthesis via DXP pathway; isopentenyl diphosphate from 1-deoxy-D-xylulose 5-phosphate: step 4/6.</text>
</comment>
<comment type="subunit">
    <text evidence="1">Homotrimer.</text>
</comment>
<comment type="similarity">
    <text evidence="1">Belongs to the IspF family.</text>
</comment>
<protein>
    <recommendedName>
        <fullName evidence="1">2-C-methyl-D-erythritol 2,4-cyclodiphosphate synthase</fullName>
        <shortName evidence="1">MECDP-synthase</shortName>
        <shortName evidence="1">MECPP-synthase</shortName>
        <shortName evidence="1">MECPS</shortName>
        <ecNumber evidence="1">4.6.1.12</ecNumber>
    </recommendedName>
</protein>
<sequence>MRIGHGYDVHRFAEGDFITLGGVRIAHGFGLLAHSDGDVLLHALSDALLGAAALGDIGKHFPDTDPQFKGADSRVLLRHVLTLIHGKGWKVGNVDATIVAQAPKMAPHIDAMRALIAEDLQVEPDQVNVKATTTEKLGFTGREEGIAVHAVALLLRA</sequence>
<name>ISPF_PSEU2</name>